<gene>
    <name type="primary">fem-3</name>
    <name type="ORF">C01F6.4</name>
</gene>
<organism>
    <name type="scientific">Caenorhabditis elegans</name>
    <dbReference type="NCBI Taxonomy" id="6239"/>
    <lineage>
        <taxon>Eukaryota</taxon>
        <taxon>Metazoa</taxon>
        <taxon>Ecdysozoa</taxon>
        <taxon>Nematoda</taxon>
        <taxon>Chromadorea</taxon>
        <taxon>Rhabditida</taxon>
        <taxon>Rhabditina</taxon>
        <taxon>Rhabditomorpha</taxon>
        <taxon>Rhabditoidea</taxon>
        <taxon>Rhabditidae</taxon>
        <taxon>Peloderinae</taxon>
        <taxon>Caenorhabditis</taxon>
    </lineage>
</organism>
<name>FEM3_CAEEL</name>
<proteinExistence type="evidence at protein level"/>
<keyword id="KW-0217">Developmental protein</keyword>
<keyword id="KW-0221">Differentiation</keyword>
<keyword id="KW-1185">Reference proteome</keyword>
<keyword id="KW-0677">Repeat</keyword>
<keyword id="KW-0726">Sexual differentiation</keyword>
<keyword id="KW-0744">Spermatogenesis</keyword>
<keyword id="KW-0833">Ubl conjugation pathway</keyword>
<dbReference type="EMBL" id="X64963">
    <property type="protein sequence ID" value="CAA46126.1"/>
    <property type="molecule type" value="Genomic_DNA"/>
</dbReference>
<dbReference type="EMBL" id="X64962">
    <property type="protein sequence ID" value="CAA46125.1"/>
    <property type="molecule type" value="mRNA"/>
</dbReference>
<dbReference type="EMBL" id="Z68213">
    <property type="protein sequence ID" value="CAA92437.1"/>
    <property type="molecule type" value="Genomic_DNA"/>
</dbReference>
<dbReference type="PIR" id="S22692">
    <property type="entry name" value="S22692"/>
</dbReference>
<dbReference type="RefSeq" id="NP_001255365.1">
    <property type="nucleotide sequence ID" value="NM_001268436.4"/>
</dbReference>
<dbReference type="BioGRID" id="42840">
    <property type="interactions" value="8"/>
</dbReference>
<dbReference type="ComplexPortal" id="CPX-3385">
    <property type="entry name" value="Fem-2 phosphatase complex"/>
</dbReference>
<dbReference type="FunCoup" id="P34691">
    <property type="interactions" value="858"/>
</dbReference>
<dbReference type="IntAct" id="P34691">
    <property type="interactions" value="6"/>
</dbReference>
<dbReference type="MINT" id="P34691"/>
<dbReference type="STRING" id="6239.C01F6.4a.1"/>
<dbReference type="PaxDb" id="6239-C01F6.4a"/>
<dbReference type="EnsemblMetazoa" id="C01F6.4a.1">
    <property type="protein sequence ID" value="C01F6.4a.1"/>
    <property type="gene ID" value="WBGene00001413"/>
</dbReference>
<dbReference type="GeneID" id="177734"/>
<dbReference type="KEGG" id="cel:CELE_C01F6.4"/>
<dbReference type="UCSC" id="C01F6.4">
    <property type="organism name" value="c. elegans"/>
</dbReference>
<dbReference type="AGR" id="WB:WBGene00001413"/>
<dbReference type="CTD" id="177734"/>
<dbReference type="WormBase" id="C01F6.4a">
    <property type="protein sequence ID" value="CE02953"/>
    <property type="gene ID" value="WBGene00001413"/>
    <property type="gene designation" value="fem-3"/>
</dbReference>
<dbReference type="eggNOG" id="ENOG502TI3W">
    <property type="taxonomic scope" value="Eukaryota"/>
</dbReference>
<dbReference type="HOGENOM" id="CLU_636523_0_0_1"/>
<dbReference type="InParanoid" id="P34691"/>
<dbReference type="OMA" id="FVFQRTM"/>
<dbReference type="OrthoDB" id="5818831at2759"/>
<dbReference type="SignaLink" id="P34691"/>
<dbReference type="PRO" id="PR:P34691"/>
<dbReference type="Proteomes" id="UP000001940">
    <property type="component" value="Chromosome IV"/>
</dbReference>
<dbReference type="Bgee" id="WBGene00001413">
    <property type="expression patterns" value="Expressed in germ line (C elegans) and 4 other cell types or tissues"/>
</dbReference>
<dbReference type="ExpressionAtlas" id="P34691">
    <property type="expression patterns" value="baseline and differential"/>
</dbReference>
<dbReference type="GO" id="GO:0031462">
    <property type="term" value="C:Cul2-RING ubiquitin ligase complex"/>
    <property type="evidence" value="ECO:0000314"/>
    <property type="project" value="ComplexPortal"/>
</dbReference>
<dbReference type="GO" id="GO:0005737">
    <property type="term" value="C:cytoplasm"/>
    <property type="evidence" value="ECO:0000314"/>
    <property type="project" value="WormBase"/>
</dbReference>
<dbReference type="GO" id="GO:0008287">
    <property type="term" value="C:protein serine/threonine phosphatase complex"/>
    <property type="evidence" value="ECO:0000314"/>
    <property type="project" value="ComplexPortal"/>
</dbReference>
<dbReference type="GO" id="GO:0032991">
    <property type="term" value="C:protein-containing complex"/>
    <property type="evidence" value="ECO:0000315"/>
    <property type="project" value="UniProtKB"/>
</dbReference>
<dbReference type="GO" id="GO:0019903">
    <property type="term" value="F:protein phosphatase binding"/>
    <property type="evidence" value="ECO:0000353"/>
    <property type="project" value="UniProtKB"/>
</dbReference>
<dbReference type="GO" id="GO:0030154">
    <property type="term" value="P:cell differentiation"/>
    <property type="evidence" value="ECO:0007669"/>
    <property type="project" value="UniProtKB-KW"/>
</dbReference>
<dbReference type="GO" id="GO:0030238">
    <property type="term" value="P:male sex determination"/>
    <property type="evidence" value="ECO:0000315"/>
    <property type="project" value="WormBase"/>
</dbReference>
<dbReference type="GO" id="GO:0019102">
    <property type="term" value="P:male somatic sex determination"/>
    <property type="evidence" value="ECO:0000315"/>
    <property type="project" value="UniProtKB"/>
</dbReference>
<dbReference type="GO" id="GO:0042006">
    <property type="term" value="P:masculinization of hermaphroditic germ-line"/>
    <property type="evidence" value="ECO:0000315"/>
    <property type="project" value="WormBase"/>
</dbReference>
<dbReference type="GO" id="GO:0010628">
    <property type="term" value="P:positive regulation of gene expression"/>
    <property type="evidence" value="ECO:0000315"/>
    <property type="project" value="UniProtKB"/>
</dbReference>
<dbReference type="GO" id="GO:0043406">
    <property type="term" value="P:positive regulation of MAP kinase activity"/>
    <property type="evidence" value="ECO:0000315"/>
    <property type="project" value="UniProtKB"/>
</dbReference>
<dbReference type="GO" id="GO:1904146">
    <property type="term" value="P:positive regulation of meiotic cell cycle process involved in oocyte maturation"/>
    <property type="evidence" value="ECO:0000315"/>
    <property type="project" value="UniProtKB"/>
</dbReference>
<dbReference type="GO" id="GO:0060282">
    <property type="term" value="P:positive regulation of oocyte development"/>
    <property type="evidence" value="ECO:0000315"/>
    <property type="project" value="UniProtKB"/>
</dbReference>
<dbReference type="GO" id="GO:0071168">
    <property type="term" value="P:protein localization to chromatin"/>
    <property type="evidence" value="ECO:0000315"/>
    <property type="project" value="UniProtKB"/>
</dbReference>
<dbReference type="GO" id="GO:1905936">
    <property type="term" value="P:regulation of germ cell proliferation"/>
    <property type="evidence" value="ECO:0000316"/>
    <property type="project" value="UniProtKB"/>
</dbReference>
<dbReference type="GO" id="GO:0007530">
    <property type="term" value="P:sex determination"/>
    <property type="evidence" value="ECO:0000315"/>
    <property type="project" value="ComplexPortal"/>
</dbReference>
<dbReference type="GO" id="GO:0007548">
    <property type="term" value="P:sex differentiation"/>
    <property type="evidence" value="ECO:0007669"/>
    <property type="project" value="UniProtKB-KW"/>
</dbReference>
<dbReference type="GO" id="GO:0007283">
    <property type="term" value="P:spermatogenesis"/>
    <property type="evidence" value="ECO:0007669"/>
    <property type="project" value="UniProtKB-KW"/>
</dbReference>
<dbReference type="InterPro" id="IPR030804">
    <property type="entry name" value="BBS5/fem-3"/>
</dbReference>
<dbReference type="PIRSF" id="PIRSF010072">
    <property type="entry name" value="DUF1448"/>
    <property type="match status" value="1"/>
</dbReference>
<comment type="function">
    <text evidence="1 2 3 5">Required for male development. In XO (male) animals, fem-3 directs male differentiation in all tissues. In XX (hermaphrodite) animals, it specifies the first 80 or so germ cells to be sperm. Negatively regulates male development when bound to tra-2. Together with fem-2 associates with the CBC(fem-1) E3 ubiquitin-protein ligase complex which mediates the ubiquitination and subsequent proteasomal degradation of tra-1.</text>
</comment>
<comment type="subunit">
    <text evidence="1 2 4 5 6">Component of a complex containing fem-1, fem-2 and fem-3 (PubMed:23760267). Interacts with fem-1 and fem-2 (via N-terminus) (PubMed:17609115, PubMed:23760267). Part of a E3 ubiquitin-protein ligase complex, at least composed of cul-2, elc-1, tra-1, fem-1, fem-2 and fem-3; mediates the ubiquitination and subsequent proteasomal degradation of tra-1 (PubMed:17609115). Interacts with tra-1 (PubMed:17609115). Interacts with sel-10 (PubMed:15306688). Interacts with tra-2 (PubMed:10364161, PubMed:12477393).</text>
</comment>
<comment type="interaction">
    <interactant intactId="EBI-445465">
        <id>P34691</id>
    </interactant>
    <interactant intactId="EBI-1998155">
        <id>P17221</id>
        <label>fem-1</label>
    </interactant>
    <organismsDiffer>false</organismsDiffer>
    <experiments>3</experiments>
</comment>
<comment type="interaction">
    <interactant intactId="EBI-445465">
        <id>P34691</id>
    </interactant>
    <interactant intactId="EBI-323098">
        <id>Q93794</id>
        <label>sel-10</label>
    </interactant>
    <organismsDiffer>false</organismsDiffer>
    <experiments>2</experiments>
</comment>
<comment type="interaction">
    <interactant intactId="EBI-445465">
        <id>P34691</id>
    </interactant>
    <interactant intactId="EBI-367214">
        <id>P34708-1</id>
        <label>tra-1</label>
    </interactant>
    <organismsDiffer>false</organismsDiffer>
    <experiments>2</experiments>
</comment>
<comment type="interaction">
    <interactant intactId="EBI-445465">
        <id>P34691</id>
    </interactant>
    <interactant intactId="EBI-367223">
        <id>P34709</id>
        <label>tra-2</label>
    </interactant>
    <organismsDiffer>false</organismsDiffer>
    <experiments>4</experiments>
</comment>
<comment type="developmental stage">
    <text evidence="3">Expressed both maternally and zygotically.</text>
</comment>
<evidence type="ECO:0000269" key="1">
    <source>
    </source>
</evidence>
<evidence type="ECO:0000269" key="2">
    <source>
    </source>
</evidence>
<evidence type="ECO:0000269" key="3">
    <source>
    </source>
</evidence>
<evidence type="ECO:0000269" key="4">
    <source>
    </source>
</evidence>
<evidence type="ECO:0000269" key="5">
    <source>
    </source>
</evidence>
<evidence type="ECO:0000269" key="6">
    <source>
    </source>
</evidence>
<accession>P34691</accession>
<protein>
    <recommendedName>
        <fullName>Sex-determination protein fem-3</fullName>
    </recommendedName>
    <alternativeName>
        <fullName>Ce-FEM-3</fullName>
    </alternativeName>
    <alternativeName>
        <fullName>Feminization of XX and XO animals protein 3</fullName>
    </alternativeName>
</protein>
<sequence>MEVDPGSDDVEADRETRAQKLKLKRNVKFRAQMRRFDEYCGVTNLTVDDLNWPLISGIPLQRQRLTGATYYDDSLLDQNPWDEFSIDRFLEITSIQLITAGAGYERNDEITRFVFQRTMKTIVTYCNFMYDLARRNGKVQITRFELQDLIHRDEFRFYMYFRQFLPNPDPNCTAFSNHYTSLLHTLYFNIPGMPQFWNNSQMYNYAATRGQRLVQNIAAFYPPEYFWNEDESKYHTTFVVPRGTEFSKFYARRFHEALGMPPLENEIITVLDWLAKLCILEIVYHTTIWCDITGFGGLPRIEHYRLAMENVEDIIFDLAIDDFSISRLQLQISPFEISRYSPLDVSGYYETIKRKKDIEEYQNRFYEVHYSDDVRIMNVYATDCSRKR</sequence>
<reference key="1">
    <citation type="journal article" date="1992" name="EMBO J.">
        <title>The Caenorhabditis elegans sex determining gene fem-3 is regulated post-transcriptionally.</title>
        <authorList>
            <person name="Ahringer J."/>
            <person name="Rosenquist T.A."/>
            <person name="Lawson D.N."/>
            <person name="Kimble J."/>
        </authorList>
    </citation>
    <scope>NUCLEOTIDE SEQUENCE [GENOMIC DNA]</scope>
    <scope>FUNCTION</scope>
    <scope>DEVELOPMENTAL STAGE</scope>
    <source>
        <strain>Bristol N2</strain>
    </source>
</reference>
<reference key="2">
    <citation type="journal article" date="1998" name="Science">
        <title>Genome sequence of the nematode C. elegans: a platform for investigating biology.</title>
        <authorList>
            <consortium name="The C. elegans sequencing consortium"/>
        </authorList>
    </citation>
    <scope>NUCLEOTIDE SEQUENCE [LARGE SCALE GENOMIC DNA]</scope>
    <source>
        <strain>Bristol N2</strain>
    </source>
</reference>
<reference key="3">
    <citation type="journal article" date="1999" name="Genes Dev.">
        <title>Negative regulation of male development in Caenorhabditis elegans by a protein-protein interaction between TRA-2A and FEM-3.</title>
        <authorList>
            <person name="Mehra A."/>
            <person name="Gaudet J."/>
            <person name="Heck L."/>
            <person name="Kuwabara P.E."/>
            <person name="Spence A.M."/>
        </authorList>
    </citation>
    <scope>FUNCTION</scope>
    <scope>INTERACTION WITH TRA-2</scope>
    <source>
        <strain>Bristol N2</strain>
    </source>
</reference>
<reference key="4">
    <citation type="journal article" date="2002" name="Curr. Biol.">
        <title>Rapid coevolution of the nematode sex-determining genes fem-3 and tra-2.</title>
        <authorList>
            <person name="Haag E.S."/>
            <person name="Wang S."/>
            <person name="Kimble J."/>
        </authorList>
    </citation>
    <scope>FUNCTION</scope>
    <scope>INTERACTION WITH TRA-2</scope>
</reference>
<reference key="5">
    <citation type="journal article" date="2004" name="Proc. Natl. Acad. Sci. U.S.A.">
        <title>The Caenorhabditis elegans F-box protein SEL-10 promotes female development and may target FEM-1 and FEM-3 for degradation by the proteasome.</title>
        <authorList>
            <person name="Jaeger S."/>
            <person name="Schwartz H.T."/>
            <person name="Horvitz H.R."/>
            <person name="Conradt B."/>
        </authorList>
    </citation>
    <scope>INTERACTION WITH SEL-10</scope>
</reference>
<reference key="6">
    <citation type="journal article" date="2007" name="Dev. Cell">
        <title>A CUL-2 ubiquitin ligase containing three FEM proteins degrades TRA-1 to regulate C. elegans sex determination.</title>
        <authorList>
            <person name="Starostina N.G."/>
            <person name="Lim J.M."/>
            <person name="Schvarzstein M."/>
            <person name="Wells L."/>
            <person name="Spence A.M."/>
            <person name="Kipreos E.T."/>
        </authorList>
    </citation>
    <scope>FUNCTION</scope>
    <scope>IDENTIFICATION IN THE CBC(FEM-1) COMPLEX</scope>
    <scope>INTERACTION WITH TRA-1; FEM-1 AND FEM-2</scope>
</reference>
<reference key="7">
    <citation type="journal article" date="2013" name="J. Biol. Chem.">
        <title>Structural insight into Caenorhabditis elegans sex-determining protein FEM-2.</title>
        <authorList>
            <person name="Zhang Y."/>
            <person name="Zhao H."/>
            <person name="Wang J."/>
            <person name="Ge J."/>
            <person name="Li Y."/>
            <person name="Gu J."/>
            <person name="Li P."/>
            <person name="Feng Y."/>
            <person name="Yang M."/>
        </authorList>
    </citation>
    <scope>IDENTIFICATION IN A COMPLEX WITH FEM-1 AND FEM-2</scope>
    <scope>INTERACTION WITH FEM-2</scope>
</reference>
<feature type="chain" id="PRO_0000087220" description="Sex-determination protein fem-3">
    <location>
        <begin position="1"/>
        <end position="388"/>
    </location>
</feature>
<feature type="repeat" description="1-1">
    <location>
        <begin position="7"/>
        <end position="10"/>
    </location>
</feature>
<feature type="repeat" description="2-1">
    <location>
        <begin position="110"/>
        <end position="113"/>
    </location>
</feature>
<feature type="repeat" description="2-2">
    <location>
        <begin position="141"/>
        <end position="144"/>
    </location>
</feature>
<feature type="repeat" description="3-1">
    <location>
        <begin position="234"/>
        <end position="237"/>
    </location>
</feature>
<feature type="repeat" description="3-2">
    <location>
        <begin position="284"/>
        <end position="287"/>
    </location>
</feature>
<feature type="repeat" description="1-2">
    <location>
        <begin position="371"/>
        <end position="374"/>
    </location>
</feature>
<feature type="sequence variant" description="In allele E2063.">
    <original>T</original>
    <variation>I</variation>
    <location>
        <position position="142"/>
    </location>
</feature>
<feature type="sequence variant" description="In allele E2006.">
    <original>M</original>
    <variation>I</variation>
    <location>
        <position position="159"/>
    </location>
</feature>
<feature type="sequence variant" description="In allele Q77.">
    <original>P</original>
    <variation>S</variation>
    <location>
        <position position="299"/>
    </location>
</feature>
<feature type="sequence variant" description="In allele E2143.">
    <original>E</original>
    <variation>K</variation>
    <location>
        <position position="360"/>
    </location>
</feature>